<comment type="function">
    <text evidence="1">Catalyzes the ATP-dependent 2-thiolation of cytidine in position 32 of tRNA, to form 2-thiocytidine (s(2)C32). The sulfur atoms are provided by the cysteine/cysteine desulfurase (IscS) system.</text>
</comment>
<comment type="catalytic activity">
    <reaction evidence="1">
        <text>cytidine(32) in tRNA + S-sulfanyl-L-cysteinyl-[cysteine desulfurase] + AH2 + ATP = 2-thiocytidine(32) in tRNA + L-cysteinyl-[cysteine desulfurase] + A + AMP + diphosphate + H(+)</text>
        <dbReference type="Rhea" id="RHEA:57048"/>
        <dbReference type="Rhea" id="RHEA-COMP:10288"/>
        <dbReference type="Rhea" id="RHEA-COMP:12157"/>
        <dbReference type="Rhea" id="RHEA-COMP:12158"/>
        <dbReference type="Rhea" id="RHEA-COMP:14821"/>
        <dbReference type="ChEBI" id="CHEBI:13193"/>
        <dbReference type="ChEBI" id="CHEBI:15378"/>
        <dbReference type="ChEBI" id="CHEBI:17499"/>
        <dbReference type="ChEBI" id="CHEBI:29950"/>
        <dbReference type="ChEBI" id="CHEBI:30616"/>
        <dbReference type="ChEBI" id="CHEBI:33019"/>
        <dbReference type="ChEBI" id="CHEBI:61963"/>
        <dbReference type="ChEBI" id="CHEBI:82748"/>
        <dbReference type="ChEBI" id="CHEBI:141453"/>
        <dbReference type="ChEBI" id="CHEBI:456215"/>
    </reaction>
    <physiologicalReaction direction="left-to-right" evidence="1">
        <dbReference type="Rhea" id="RHEA:57049"/>
    </physiologicalReaction>
</comment>
<comment type="cofactor">
    <cofactor evidence="1">
        <name>Mg(2+)</name>
        <dbReference type="ChEBI" id="CHEBI:18420"/>
    </cofactor>
</comment>
<comment type="cofactor">
    <cofactor evidence="1">
        <name>[4Fe-4S] cluster</name>
        <dbReference type="ChEBI" id="CHEBI:49883"/>
    </cofactor>
    <text evidence="1">Binds 1 [4Fe-4S] cluster per subunit. The cluster is chelated by three Cys residues, the fourth Fe has a free coordination site that may bind a sulfur atom transferred from the persulfide of IscS.</text>
</comment>
<comment type="pathway">
    <text evidence="1">tRNA modification.</text>
</comment>
<comment type="subunit">
    <text evidence="1">Homodimer.</text>
</comment>
<comment type="subcellular location">
    <subcellularLocation>
        <location evidence="1">Cytoplasm</location>
    </subcellularLocation>
</comment>
<comment type="miscellaneous">
    <text evidence="1">The thiolation reaction likely consists of two steps: a first activation step by ATP to form an adenylated intermediate of the target base of tRNA, and a second nucleophilic substitution step of the sulfur (S) atom supplied by the hydrosulfide attached to the Fe-S cluster.</text>
</comment>
<comment type="similarity">
    <text evidence="1">Belongs to the TtcA family.</text>
</comment>
<name>TTCA_CHESB</name>
<sequence length="284" mass="32233">MTFHQPVSETAQPDEASGHPLFADAPSSVEFNKLRKRLLRQVRQAFEDFTMVKPGDRWLVALSGGKDSYGLLAVLLDLKWRGLLPVELLACNLDQGQPNFPKHILPDYLTRLGVPHRIEYQDTYSVVTEKIPENRTYCSLCSRLRRGHLYRIAREEGCSSLVLGHHREDILETFFMNFFHGGRLAAMPPKLLNDEGDVLVLRPLAYCAETDLVKFAEGMKFPIIPCDLCGSQDGLQRNAMKAMLEDIERRMPGRKDTMIRALANVRPSHLLDRQLFDFAGLGIL</sequence>
<feature type="chain" id="PRO_0000348766" description="tRNA-cytidine(32) 2-sulfurtransferase">
    <location>
        <begin position="1"/>
        <end position="284"/>
    </location>
</feature>
<feature type="region of interest" description="Disordered" evidence="2">
    <location>
        <begin position="1"/>
        <end position="20"/>
    </location>
</feature>
<feature type="short sequence motif" description="PP-loop motif" evidence="1">
    <location>
        <begin position="63"/>
        <end position="68"/>
    </location>
</feature>
<feature type="compositionally biased region" description="Polar residues" evidence="2">
    <location>
        <begin position="1"/>
        <end position="11"/>
    </location>
</feature>
<feature type="binding site" evidence="1">
    <location>
        <position position="138"/>
    </location>
    <ligand>
        <name>[4Fe-4S] cluster</name>
        <dbReference type="ChEBI" id="CHEBI:49883"/>
    </ligand>
</feature>
<feature type="binding site" evidence="1">
    <location>
        <position position="141"/>
    </location>
    <ligand>
        <name>[4Fe-4S] cluster</name>
        <dbReference type="ChEBI" id="CHEBI:49883"/>
    </ligand>
</feature>
<feature type="binding site" evidence="1">
    <location>
        <position position="229"/>
    </location>
    <ligand>
        <name>[4Fe-4S] cluster</name>
        <dbReference type="ChEBI" id="CHEBI:49883"/>
    </ligand>
</feature>
<proteinExistence type="inferred from homology"/>
<protein>
    <recommendedName>
        <fullName evidence="1">tRNA-cytidine(32) 2-sulfurtransferase</fullName>
        <ecNumber evidence="1">2.8.1.-</ecNumber>
    </recommendedName>
    <alternativeName>
        <fullName evidence="1">Two-thiocytidine biosynthesis protein A</fullName>
    </alternativeName>
    <alternativeName>
        <fullName evidence="1">tRNA 2-thiocytidine biosynthesis protein TtcA</fullName>
    </alternativeName>
</protein>
<organism>
    <name type="scientific">Chelativorans sp. (strain BNC1)</name>
    <dbReference type="NCBI Taxonomy" id="266779"/>
    <lineage>
        <taxon>Bacteria</taxon>
        <taxon>Pseudomonadati</taxon>
        <taxon>Pseudomonadota</taxon>
        <taxon>Alphaproteobacteria</taxon>
        <taxon>Hyphomicrobiales</taxon>
        <taxon>Phyllobacteriaceae</taxon>
        <taxon>Chelativorans</taxon>
    </lineage>
</organism>
<reference key="1">
    <citation type="submission" date="2006-06" db="EMBL/GenBank/DDBJ databases">
        <title>Complete sequence of chromosome of Mesorhizobium sp. BNC1.</title>
        <authorList>
            <consortium name="US DOE Joint Genome Institute"/>
            <person name="Copeland A."/>
            <person name="Lucas S."/>
            <person name="Lapidus A."/>
            <person name="Barry K."/>
            <person name="Detter J.C."/>
            <person name="Glavina del Rio T."/>
            <person name="Hammon N."/>
            <person name="Israni S."/>
            <person name="Dalin E."/>
            <person name="Tice H."/>
            <person name="Pitluck S."/>
            <person name="Chertkov O."/>
            <person name="Brettin T."/>
            <person name="Bruce D."/>
            <person name="Han C."/>
            <person name="Tapia R."/>
            <person name="Gilna P."/>
            <person name="Schmutz J."/>
            <person name="Larimer F."/>
            <person name="Land M."/>
            <person name="Hauser L."/>
            <person name="Kyrpides N."/>
            <person name="Mikhailova N."/>
            <person name="Richardson P."/>
        </authorList>
    </citation>
    <scope>NUCLEOTIDE SEQUENCE [LARGE SCALE GENOMIC DNA]</scope>
    <source>
        <strain>BNC1</strain>
    </source>
</reference>
<dbReference type="EC" id="2.8.1.-" evidence="1"/>
<dbReference type="EMBL" id="CP000390">
    <property type="protein sequence ID" value="ABG62667.1"/>
    <property type="molecule type" value="Genomic_DNA"/>
</dbReference>
<dbReference type="SMR" id="Q11IV8"/>
<dbReference type="STRING" id="266779.Meso_1271"/>
<dbReference type="KEGG" id="mes:Meso_1271"/>
<dbReference type="eggNOG" id="COG0037">
    <property type="taxonomic scope" value="Bacteria"/>
</dbReference>
<dbReference type="HOGENOM" id="CLU_026481_0_0_5"/>
<dbReference type="OrthoDB" id="9801054at2"/>
<dbReference type="GO" id="GO:0005737">
    <property type="term" value="C:cytoplasm"/>
    <property type="evidence" value="ECO:0007669"/>
    <property type="project" value="UniProtKB-SubCell"/>
</dbReference>
<dbReference type="GO" id="GO:0051539">
    <property type="term" value="F:4 iron, 4 sulfur cluster binding"/>
    <property type="evidence" value="ECO:0007669"/>
    <property type="project" value="UniProtKB-UniRule"/>
</dbReference>
<dbReference type="GO" id="GO:0005524">
    <property type="term" value="F:ATP binding"/>
    <property type="evidence" value="ECO:0007669"/>
    <property type="project" value="UniProtKB-UniRule"/>
</dbReference>
<dbReference type="GO" id="GO:0000287">
    <property type="term" value="F:magnesium ion binding"/>
    <property type="evidence" value="ECO:0007669"/>
    <property type="project" value="UniProtKB-UniRule"/>
</dbReference>
<dbReference type="GO" id="GO:0016783">
    <property type="term" value="F:sulfurtransferase activity"/>
    <property type="evidence" value="ECO:0007669"/>
    <property type="project" value="UniProtKB-UniRule"/>
</dbReference>
<dbReference type="GO" id="GO:0000049">
    <property type="term" value="F:tRNA binding"/>
    <property type="evidence" value="ECO:0007669"/>
    <property type="project" value="UniProtKB-KW"/>
</dbReference>
<dbReference type="GO" id="GO:0034227">
    <property type="term" value="P:tRNA thio-modification"/>
    <property type="evidence" value="ECO:0007669"/>
    <property type="project" value="UniProtKB-UniRule"/>
</dbReference>
<dbReference type="CDD" id="cd24138">
    <property type="entry name" value="TtcA-like"/>
    <property type="match status" value="1"/>
</dbReference>
<dbReference type="Gene3D" id="3.40.50.620">
    <property type="entry name" value="HUPs"/>
    <property type="match status" value="1"/>
</dbReference>
<dbReference type="HAMAP" id="MF_01850">
    <property type="entry name" value="TtcA"/>
    <property type="match status" value="1"/>
</dbReference>
<dbReference type="InterPro" id="IPR014729">
    <property type="entry name" value="Rossmann-like_a/b/a_fold"/>
</dbReference>
<dbReference type="InterPro" id="IPR011063">
    <property type="entry name" value="TilS/TtcA_N"/>
</dbReference>
<dbReference type="InterPro" id="IPR012089">
    <property type="entry name" value="tRNA_Cyd_32_2_STrfase"/>
</dbReference>
<dbReference type="InterPro" id="IPR035107">
    <property type="entry name" value="tRNA_thiolation_TtcA_Ctu1"/>
</dbReference>
<dbReference type="NCBIfam" id="NF007972">
    <property type="entry name" value="PRK10696.1"/>
    <property type="match status" value="1"/>
</dbReference>
<dbReference type="PANTHER" id="PTHR43686:SF1">
    <property type="entry name" value="AMINOTRAN_5 DOMAIN-CONTAINING PROTEIN"/>
    <property type="match status" value="1"/>
</dbReference>
<dbReference type="PANTHER" id="PTHR43686">
    <property type="entry name" value="SULFURTRANSFERASE-RELATED"/>
    <property type="match status" value="1"/>
</dbReference>
<dbReference type="Pfam" id="PF01171">
    <property type="entry name" value="ATP_bind_3"/>
    <property type="match status" value="1"/>
</dbReference>
<dbReference type="PIRSF" id="PIRSF004976">
    <property type="entry name" value="ATPase_YdaO"/>
    <property type="match status" value="1"/>
</dbReference>
<dbReference type="SUPFAM" id="SSF52402">
    <property type="entry name" value="Adenine nucleotide alpha hydrolases-like"/>
    <property type="match status" value="1"/>
</dbReference>
<keyword id="KW-0004">4Fe-4S</keyword>
<keyword id="KW-0067">ATP-binding</keyword>
<keyword id="KW-0963">Cytoplasm</keyword>
<keyword id="KW-0408">Iron</keyword>
<keyword id="KW-0411">Iron-sulfur</keyword>
<keyword id="KW-0460">Magnesium</keyword>
<keyword id="KW-0479">Metal-binding</keyword>
<keyword id="KW-0547">Nucleotide-binding</keyword>
<keyword id="KW-0694">RNA-binding</keyword>
<keyword id="KW-0808">Transferase</keyword>
<keyword id="KW-0819">tRNA processing</keyword>
<keyword id="KW-0820">tRNA-binding</keyword>
<accession>Q11IV8</accession>
<gene>
    <name evidence="1" type="primary">ttcA</name>
    <name type="ordered locus">Meso_1271</name>
</gene>
<evidence type="ECO:0000255" key="1">
    <source>
        <dbReference type="HAMAP-Rule" id="MF_01850"/>
    </source>
</evidence>
<evidence type="ECO:0000256" key="2">
    <source>
        <dbReference type="SAM" id="MobiDB-lite"/>
    </source>
</evidence>